<proteinExistence type="inferred from homology"/>
<name>SYK_ACIBS</name>
<organism>
    <name type="scientific">Acinetobacter baumannii (strain SDF)</name>
    <dbReference type="NCBI Taxonomy" id="509170"/>
    <lineage>
        <taxon>Bacteria</taxon>
        <taxon>Pseudomonadati</taxon>
        <taxon>Pseudomonadota</taxon>
        <taxon>Gammaproteobacteria</taxon>
        <taxon>Moraxellales</taxon>
        <taxon>Moraxellaceae</taxon>
        <taxon>Acinetobacter</taxon>
        <taxon>Acinetobacter calcoaceticus/baumannii complex</taxon>
    </lineage>
</organism>
<reference key="1">
    <citation type="journal article" date="2008" name="PLoS ONE">
        <title>Comparative analysis of Acinetobacters: three genomes for three lifestyles.</title>
        <authorList>
            <person name="Vallenet D."/>
            <person name="Nordmann P."/>
            <person name="Barbe V."/>
            <person name="Poirel L."/>
            <person name="Mangenot S."/>
            <person name="Bataille E."/>
            <person name="Dossat C."/>
            <person name="Gas S."/>
            <person name="Kreimeyer A."/>
            <person name="Lenoble P."/>
            <person name="Oztas S."/>
            <person name="Poulain J."/>
            <person name="Segurens B."/>
            <person name="Robert C."/>
            <person name="Abergel C."/>
            <person name="Claverie J.-M."/>
            <person name="Raoult D."/>
            <person name="Medigue C."/>
            <person name="Weissenbach J."/>
            <person name="Cruveiller S."/>
        </authorList>
    </citation>
    <scope>NUCLEOTIDE SEQUENCE [LARGE SCALE GENOMIC DNA]</scope>
    <source>
        <strain>SDF</strain>
    </source>
</reference>
<comment type="catalytic activity">
    <reaction evidence="1">
        <text>tRNA(Lys) + L-lysine + ATP = L-lysyl-tRNA(Lys) + AMP + diphosphate</text>
        <dbReference type="Rhea" id="RHEA:20792"/>
        <dbReference type="Rhea" id="RHEA-COMP:9696"/>
        <dbReference type="Rhea" id="RHEA-COMP:9697"/>
        <dbReference type="ChEBI" id="CHEBI:30616"/>
        <dbReference type="ChEBI" id="CHEBI:32551"/>
        <dbReference type="ChEBI" id="CHEBI:33019"/>
        <dbReference type="ChEBI" id="CHEBI:78442"/>
        <dbReference type="ChEBI" id="CHEBI:78529"/>
        <dbReference type="ChEBI" id="CHEBI:456215"/>
        <dbReference type="EC" id="6.1.1.6"/>
    </reaction>
</comment>
<comment type="cofactor">
    <cofactor evidence="1">
        <name>Mg(2+)</name>
        <dbReference type="ChEBI" id="CHEBI:18420"/>
    </cofactor>
    <text evidence="1">Binds 3 Mg(2+) ions per subunit.</text>
</comment>
<comment type="subunit">
    <text evidence="1">Homodimer.</text>
</comment>
<comment type="subcellular location">
    <subcellularLocation>
        <location evidence="1">Cytoplasm</location>
    </subcellularLocation>
</comment>
<comment type="similarity">
    <text evidence="1">Belongs to the class-II aminoacyl-tRNA synthetase family.</text>
</comment>
<accession>B0VSE0</accession>
<gene>
    <name evidence="1" type="primary">lysS</name>
    <name type="ordered locus">ABSDF2397</name>
</gene>
<keyword id="KW-0030">Aminoacyl-tRNA synthetase</keyword>
<keyword id="KW-0067">ATP-binding</keyword>
<keyword id="KW-0963">Cytoplasm</keyword>
<keyword id="KW-0436">Ligase</keyword>
<keyword id="KW-0460">Magnesium</keyword>
<keyword id="KW-0479">Metal-binding</keyword>
<keyword id="KW-0547">Nucleotide-binding</keyword>
<keyword id="KW-0648">Protein biosynthesis</keyword>
<feature type="chain" id="PRO_1000101088" description="Lysine--tRNA ligase">
    <location>
        <begin position="1"/>
        <end position="509"/>
    </location>
</feature>
<feature type="binding site" evidence="1">
    <location>
        <position position="418"/>
    </location>
    <ligand>
        <name>Mg(2+)</name>
        <dbReference type="ChEBI" id="CHEBI:18420"/>
        <label>1</label>
    </ligand>
</feature>
<feature type="binding site" evidence="1">
    <location>
        <position position="425"/>
    </location>
    <ligand>
        <name>Mg(2+)</name>
        <dbReference type="ChEBI" id="CHEBI:18420"/>
        <label>1</label>
    </ligand>
</feature>
<feature type="binding site" evidence="1">
    <location>
        <position position="425"/>
    </location>
    <ligand>
        <name>Mg(2+)</name>
        <dbReference type="ChEBI" id="CHEBI:18420"/>
        <label>2</label>
    </ligand>
</feature>
<sequence length="509" mass="58146">MTQQNAQSTSEPTISENDLIAQRHAKLKQIQDVAKETGKSPWPNTFKREHYAADLQEQFKDQSKEQIESAEHVYVKVAGRVMLNRGSFMVIQDMTGRIQLYVDRKGLPKDTLETIKGLDLGDIIAAEGYIGRSGKGDLYVHLEGFELLTKSLRPLPDKFHGLNDTEVKYRKRYLDLIVNEETRKTFEIRAKVVAGIRAFLTNERFMEVETPMMHVIPGGASARPFETHHNALDMPLFLRIAPELYLKRLVVGGFERVFEINRNFRNEGVSTRHNPEFTMIEFYQAYADYKDLMALTENMLEKLALDILGTTDVPYQGEVFSFKGPFKKISMFDAILENNPQFTPENVGDREFLAKFVREELKEEVKPGFGLGKLQTIVFEETVETKLRQPTFITEYPAETSPLARRNDDNPHITDRFEFFIGGRELANGFSELNDPIDQAERFQAQVAEKDAGDDEAMHYDAEFVEALEYGLPPTAGEGIGIDRLVMLFADAPSIRDVILFPHMRRKEG</sequence>
<evidence type="ECO:0000255" key="1">
    <source>
        <dbReference type="HAMAP-Rule" id="MF_00252"/>
    </source>
</evidence>
<protein>
    <recommendedName>
        <fullName evidence="1">Lysine--tRNA ligase</fullName>
        <ecNumber evidence="1">6.1.1.6</ecNumber>
    </recommendedName>
    <alternativeName>
        <fullName evidence="1">Lysyl-tRNA synthetase</fullName>
        <shortName evidence="1">LysRS</shortName>
    </alternativeName>
</protein>
<dbReference type="EC" id="6.1.1.6" evidence="1"/>
<dbReference type="EMBL" id="CU468230">
    <property type="protein sequence ID" value="CAP01708.1"/>
    <property type="molecule type" value="Genomic_DNA"/>
</dbReference>
<dbReference type="SMR" id="B0VSE0"/>
<dbReference type="KEGG" id="abm:ABSDF2397"/>
<dbReference type="HOGENOM" id="CLU_008255_6_0_6"/>
<dbReference type="Proteomes" id="UP000001741">
    <property type="component" value="Chromosome"/>
</dbReference>
<dbReference type="GO" id="GO:0005829">
    <property type="term" value="C:cytosol"/>
    <property type="evidence" value="ECO:0007669"/>
    <property type="project" value="TreeGrafter"/>
</dbReference>
<dbReference type="GO" id="GO:0005524">
    <property type="term" value="F:ATP binding"/>
    <property type="evidence" value="ECO:0007669"/>
    <property type="project" value="UniProtKB-UniRule"/>
</dbReference>
<dbReference type="GO" id="GO:0004824">
    <property type="term" value="F:lysine-tRNA ligase activity"/>
    <property type="evidence" value="ECO:0007669"/>
    <property type="project" value="UniProtKB-UniRule"/>
</dbReference>
<dbReference type="GO" id="GO:0000287">
    <property type="term" value="F:magnesium ion binding"/>
    <property type="evidence" value="ECO:0007669"/>
    <property type="project" value="UniProtKB-UniRule"/>
</dbReference>
<dbReference type="GO" id="GO:0000049">
    <property type="term" value="F:tRNA binding"/>
    <property type="evidence" value="ECO:0007669"/>
    <property type="project" value="TreeGrafter"/>
</dbReference>
<dbReference type="GO" id="GO:0006430">
    <property type="term" value="P:lysyl-tRNA aminoacylation"/>
    <property type="evidence" value="ECO:0007669"/>
    <property type="project" value="UniProtKB-UniRule"/>
</dbReference>
<dbReference type="CDD" id="cd00775">
    <property type="entry name" value="LysRS_core"/>
    <property type="match status" value="1"/>
</dbReference>
<dbReference type="CDD" id="cd04322">
    <property type="entry name" value="LysRS_N"/>
    <property type="match status" value="1"/>
</dbReference>
<dbReference type="FunFam" id="2.40.50.140:FF:000024">
    <property type="entry name" value="Lysine--tRNA ligase"/>
    <property type="match status" value="1"/>
</dbReference>
<dbReference type="FunFam" id="3.30.930.10:FF:000001">
    <property type="entry name" value="Lysine--tRNA ligase"/>
    <property type="match status" value="1"/>
</dbReference>
<dbReference type="Gene3D" id="3.30.930.10">
    <property type="entry name" value="Bira Bifunctional Protein, Domain 2"/>
    <property type="match status" value="1"/>
</dbReference>
<dbReference type="Gene3D" id="2.40.50.140">
    <property type="entry name" value="Nucleic acid-binding proteins"/>
    <property type="match status" value="1"/>
</dbReference>
<dbReference type="HAMAP" id="MF_00252">
    <property type="entry name" value="Lys_tRNA_synth_class2"/>
    <property type="match status" value="1"/>
</dbReference>
<dbReference type="InterPro" id="IPR004364">
    <property type="entry name" value="Aa-tRNA-synt_II"/>
</dbReference>
<dbReference type="InterPro" id="IPR006195">
    <property type="entry name" value="aa-tRNA-synth_II"/>
</dbReference>
<dbReference type="InterPro" id="IPR045864">
    <property type="entry name" value="aa-tRNA-synth_II/BPL/LPL"/>
</dbReference>
<dbReference type="InterPro" id="IPR002313">
    <property type="entry name" value="Lys-tRNA-ligase_II"/>
</dbReference>
<dbReference type="InterPro" id="IPR044136">
    <property type="entry name" value="Lys-tRNA-ligase_II_N"/>
</dbReference>
<dbReference type="InterPro" id="IPR018149">
    <property type="entry name" value="Lys-tRNA-synth_II_C"/>
</dbReference>
<dbReference type="InterPro" id="IPR012340">
    <property type="entry name" value="NA-bd_OB-fold"/>
</dbReference>
<dbReference type="InterPro" id="IPR004365">
    <property type="entry name" value="NA-bd_OB_tRNA"/>
</dbReference>
<dbReference type="NCBIfam" id="TIGR00499">
    <property type="entry name" value="lysS_bact"/>
    <property type="match status" value="1"/>
</dbReference>
<dbReference type="NCBIfam" id="NF001756">
    <property type="entry name" value="PRK00484.1"/>
    <property type="match status" value="1"/>
</dbReference>
<dbReference type="PANTHER" id="PTHR42918:SF15">
    <property type="entry name" value="LYSINE--TRNA LIGASE, CHLOROPLASTIC_MITOCHONDRIAL"/>
    <property type="match status" value="1"/>
</dbReference>
<dbReference type="PANTHER" id="PTHR42918">
    <property type="entry name" value="LYSYL-TRNA SYNTHETASE"/>
    <property type="match status" value="1"/>
</dbReference>
<dbReference type="Pfam" id="PF00152">
    <property type="entry name" value="tRNA-synt_2"/>
    <property type="match status" value="1"/>
</dbReference>
<dbReference type="Pfam" id="PF01336">
    <property type="entry name" value="tRNA_anti-codon"/>
    <property type="match status" value="1"/>
</dbReference>
<dbReference type="PRINTS" id="PR00982">
    <property type="entry name" value="TRNASYNTHLYS"/>
</dbReference>
<dbReference type="SUPFAM" id="SSF55681">
    <property type="entry name" value="Class II aaRS and biotin synthetases"/>
    <property type="match status" value="1"/>
</dbReference>
<dbReference type="SUPFAM" id="SSF50249">
    <property type="entry name" value="Nucleic acid-binding proteins"/>
    <property type="match status" value="1"/>
</dbReference>
<dbReference type="PROSITE" id="PS50862">
    <property type="entry name" value="AA_TRNA_LIGASE_II"/>
    <property type="match status" value="1"/>
</dbReference>